<dbReference type="EC" id="7.1.1.9"/>
<dbReference type="EMBL" id="D16387">
    <property type="protein sequence ID" value="BAA03882.1"/>
    <property type="molecule type" value="Genomic_DNA"/>
</dbReference>
<dbReference type="PIR" id="S70599">
    <property type="entry name" value="S70599"/>
</dbReference>
<dbReference type="SMR" id="Q37411"/>
<dbReference type="CTD" id="4513"/>
<dbReference type="GO" id="GO:0005743">
    <property type="term" value="C:mitochondrial inner membrane"/>
    <property type="evidence" value="ECO:0007669"/>
    <property type="project" value="UniProtKB-SubCell"/>
</dbReference>
<dbReference type="GO" id="GO:0005507">
    <property type="term" value="F:copper ion binding"/>
    <property type="evidence" value="ECO:0007669"/>
    <property type="project" value="InterPro"/>
</dbReference>
<dbReference type="GO" id="GO:0004129">
    <property type="term" value="F:cytochrome-c oxidase activity"/>
    <property type="evidence" value="ECO:0007669"/>
    <property type="project" value="UniProtKB-EC"/>
</dbReference>
<dbReference type="GO" id="GO:0042773">
    <property type="term" value="P:ATP synthesis coupled electron transport"/>
    <property type="evidence" value="ECO:0007669"/>
    <property type="project" value="TreeGrafter"/>
</dbReference>
<dbReference type="CDD" id="cd13912">
    <property type="entry name" value="CcO_II_C"/>
    <property type="match status" value="1"/>
</dbReference>
<dbReference type="FunFam" id="1.10.287.90:FF:000001">
    <property type="entry name" value="Cytochrome c oxidase subunit 2"/>
    <property type="match status" value="1"/>
</dbReference>
<dbReference type="FunFam" id="2.60.40.420:FF:000001">
    <property type="entry name" value="Cytochrome c oxidase subunit 2"/>
    <property type="match status" value="1"/>
</dbReference>
<dbReference type="Gene3D" id="1.10.287.90">
    <property type="match status" value="1"/>
</dbReference>
<dbReference type="Gene3D" id="2.60.40.420">
    <property type="entry name" value="Cupredoxins - blue copper proteins"/>
    <property type="match status" value="1"/>
</dbReference>
<dbReference type="InterPro" id="IPR045187">
    <property type="entry name" value="CcO_II"/>
</dbReference>
<dbReference type="InterPro" id="IPR002429">
    <property type="entry name" value="CcO_II-like_C"/>
</dbReference>
<dbReference type="InterPro" id="IPR034210">
    <property type="entry name" value="CcO_II_C"/>
</dbReference>
<dbReference type="InterPro" id="IPR001505">
    <property type="entry name" value="Copper_CuA"/>
</dbReference>
<dbReference type="InterPro" id="IPR008972">
    <property type="entry name" value="Cupredoxin"/>
</dbReference>
<dbReference type="InterPro" id="IPR014222">
    <property type="entry name" value="Cyt_c_oxidase_su2"/>
</dbReference>
<dbReference type="InterPro" id="IPR011759">
    <property type="entry name" value="Cyt_c_oxidase_su2_TM_dom"/>
</dbReference>
<dbReference type="InterPro" id="IPR036257">
    <property type="entry name" value="Cyt_c_oxidase_su2_TM_sf"/>
</dbReference>
<dbReference type="NCBIfam" id="TIGR02866">
    <property type="entry name" value="CoxB"/>
    <property type="match status" value="1"/>
</dbReference>
<dbReference type="PANTHER" id="PTHR22888:SF9">
    <property type="entry name" value="CYTOCHROME C OXIDASE SUBUNIT 2"/>
    <property type="match status" value="1"/>
</dbReference>
<dbReference type="PANTHER" id="PTHR22888">
    <property type="entry name" value="CYTOCHROME C OXIDASE, SUBUNIT II"/>
    <property type="match status" value="1"/>
</dbReference>
<dbReference type="Pfam" id="PF00116">
    <property type="entry name" value="COX2"/>
    <property type="match status" value="1"/>
</dbReference>
<dbReference type="Pfam" id="PF02790">
    <property type="entry name" value="COX2_TM"/>
    <property type="match status" value="1"/>
</dbReference>
<dbReference type="PRINTS" id="PR01166">
    <property type="entry name" value="CYCOXIDASEII"/>
</dbReference>
<dbReference type="SUPFAM" id="SSF49503">
    <property type="entry name" value="Cupredoxins"/>
    <property type="match status" value="1"/>
</dbReference>
<dbReference type="SUPFAM" id="SSF81464">
    <property type="entry name" value="Cytochrome c oxidase subunit II-like, transmembrane region"/>
    <property type="match status" value="1"/>
</dbReference>
<dbReference type="PROSITE" id="PS00078">
    <property type="entry name" value="COX2"/>
    <property type="match status" value="1"/>
</dbReference>
<dbReference type="PROSITE" id="PS50857">
    <property type="entry name" value="COX2_CUA"/>
    <property type="match status" value="1"/>
</dbReference>
<dbReference type="PROSITE" id="PS50999">
    <property type="entry name" value="COX2_TM"/>
    <property type="match status" value="1"/>
</dbReference>
<name>COX2_PATPE</name>
<sequence>MANWTQLGLQDASSPLMEELIYFHDYTLIILTLITILVFYGLASLLFSSNTNRFFLEGQGLETVWTIIPAVILIFIALPSLQLLYLMDEVNNPYLTIKAIGHQWYWSYEYADYRELEFDSYMIPTSDLTSGNPRLLEVDNRLTLPAQTPIRVLVSSADVLHSWAIPSLGIKMDAVPGRLNQVNFFISRCGLFYGQCSEICGANHSFMPIVIESVNFSTFETWVSNFITE</sequence>
<feature type="chain" id="PRO_0000183505" description="Cytochrome c oxidase subunit 2">
    <location>
        <begin position="1"/>
        <end position="229"/>
    </location>
</feature>
<feature type="topological domain" description="Mitochondrial intermembrane" evidence="2">
    <location>
        <begin position="1"/>
        <end position="26"/>
    </location>
</feature>
<feature type="transmembrane region" description="Helical" evidence="2">
    <location>
        <begin position="27"/>
        <end position="48"/>
    </location>
</feature>
<feature type="topological domain" description="Mitochondrial matrix" evidence="2">
    <location>
        <begin position="49"/>
        <end position="62"/>
    </location>
</feature>
<feature type="transmembrane region" description="Helical" evidence="2">
    <location>
        <begin position="63"/>
        <end position="82"/>
    </location>
</feature>
<feature type="topological domain" description="Mitochondrial intermembrane" evidence="2">
    <location>
        <begin position="83"/>
        <end position="229"/>
    </location>
</feature>
<feature type="binding site" evidence="1">
    <location>
        <position position="161"/>
    </location>
    <ligand>
        <name>Cu cation</name>
        <dbReference type="ChEBI" id="CHEBI:23378"/>
        <label>A1</label>
    </ligand>
</feature>
<feature type="binding site" evidence="1">
    <location>
        <position position="196"/>
    </location>
    <ligand>
        <name>Cu cation</name>
        <dbReference type="ChEBI" id="CHEBI:23378"/>
        <label>A1</label>
    </ligand>
</feature>
<feature type="binding site" evidence="1">
    <location>
        <position position="196"/>
    </location>
    <ligand>
        <name>Cu cation</name>
        <dbReference type="ChEBI" id="CHEBI:23378"/>
        <label>A2</label>
    </ligand>
</feature>
<feature type="binding site" evidence="1">
    <location>
        <position position="198"/>
    </location>
    <ligand>
        <name>Cu cation</name>
        <dbReference type="ChEBI" id="CHEBI:23378"/>
        <label>A2</label>
    </ligand>
</feature>
<feature type="binding site" evidence="1">
    <location>
        <position position="198"/>
    </location>
    <ligand>
        <name>Mg(2+)</name>
        <dbReference type="ChEBI" id="CHEBI:18420"/>
        <note>ligand shared with subunit 1</note>
    </ligand>
</feature>
<feature type="binding site" evidence="1">
    <location>
        <position position="200"/>
    </location>
    <ligand>
        <name>Cu cation</name>
        <dbReference type="ChEBI" id="CHEBI:23378"/>
        <label>A1</label>
    </ligand>
</feature>
<feature type="binding site" evidence="1">
    <location>
        <position position="200"/>
    </location>
    <ligand>
        <name>Cu cation</name>
        <dbReference type="ChEBI" id="CHEBI:23378"/>
        <label>A2</label>
    </ligand>
</feature>
<feature type="binding site" evidence="1">
    <location>
        <position position="204"/>
    </location>
    <ligand>
        <name>Cu cation</name>
        <dbReference type="ChEBI" id="CHEBI:23378"/>
        <label>A2</label>
    </ligand>
</feature>
<feature type="binding site" evidence="1">
    <location>
        <position position="207"/>
    </location>
    <ligand>
        <name>Cu cation</name>
        <dbReference type="ChEBI" id="CHEBI:23378"/>
        <label>A1</label>
    </ligand>
</feature>
<evidence type="ECO:0000250" key="1">
    <source>
        <dbReference type="UniProtKB" id="P00410"/>
    </source>
</evidence>
<evidence type="ECO:0000255" key="2"/>
<evidence type="ECO:0000305" key="3"/>
<keyword id="KW-0186">Copper</keyword>
<keyword id="KW-0249">Electron transport</keyword>
<keyword id="KW-0460">Magnesium</keyword>
<keyword id="KW-0472">Membrane</keyword>
<keyword id="KW-0479">Metal-binding</keyword>
<keyword id="KW-0496">Mitochondrion</keyword>
<keyword id="KW-0999">Mitochondrion inner membrane</keyword>
<keyword id="KW-0679">Respiratory chain</keyword>
<keyword id="KW-1278">Translocase</keyword>
<keyword id="KW-0812">Transmembrane</keyword>
<keyword id="KW-1133">Transmembrane helix</keyword>
<keyword id="KW-0813">Transport</keyword>
<comment type="function">
    <text evidence="1">Component of the cytochrome c oxidase, the last enzyme in the mitochondrial electron transport chain which drives oxidative phosphorylation. The respiratory chain contains 3 multisubunit complexes succinate dehydrogenase (complex II, CII), ubiquinol-cytochrome c oxidoreductase (cytochrome b-c1 complex, complex III, CIII) and cytochrome c oxidase (complex IV, CIV), that cooperate to transfer electrons derived from NADH and succinate to molecular oxygen, creating an electrochemical gradient over the inner membrane that drives transmembrane transport and the ATP synthase. Cytochrome c oxidase is the component of the respiratory chain that catalyzes the reduction of oxygen to water. Electrons originating from reduced cytochrome c in the intermembrane space (IMS) are transferred via the dinuclear copper A center (CU(A)) of subunit 2 and heme A of subunit 1 to the active site in subunit 1, a binuclear center (BNC) formed by heme A3 and copper B (CU(B)). The BNC reduces molecular oxygen to 2 water molecules using 4 electrons from cytochrome c in the IMS and 4 protons from the mitochondrial matrix.</text>
</comment>
<comment type="catalytic activity">
    <reaction evidence="1">
        <text>4 Fe(II)-[cytochrome c] + O2 + 8 H(+)(in) = 4 Fe(III)-[cytochrome c] + 2 H2O + 4 H(+)(out)</text>
        <dbReference type="Rhea" id="RHEA:11436"/>
        <dbReference type="Rhea" id="RHEA-COMP:10350"/>
        <dbReference type="Rhea" id="RHEA-COMP:14399"/>
        <dbReference type="ChEBI" id="CHEBI:15377"/>
        <dbReference type="ChEBI" id="CHEBI:15378"/>
        <dbReference type="ChEBI" id="CHEBI:15379"/>
        <dbReference type="ChEBI" id="CHEBI:29033"/>
        <dbReference type="ChEBI" id="CHEBI:29034"/>
        <dbReference type="EC" id="7.1.1.9"/>
    </reaction>
    <physiologicalReaction direction="left-to-right" evidence="1">
        <dbReference type="Rhea" id="RHEA:11437"/>
    </physiologicalReaction>
</comment>
<comment type="cofactor">
    <cofactor evidence="1">
        <name>Cu cation</name>
        <dbReference type="ChEBI" id="CHEBI:23378"/>
    </cofactor>
    <text evidence="1">Binds a dinuclear copper A center per subunit.</text>
</comment>
<comment type="subunit">
    <text evidence="1">Component of the cytochrome c oxidase (complex IV, CIV), a multisubunit enzyme composed of a catalytic core of 3 subunits and several supernumerary subunits. The complex exists as a monomer or a dimer and forms supercomplexes (SCs) in the inner mitochondrial membrane with ubiquinol-cytochrome c oxidoreductase (cytochrome b-c1 complex, complex III, CIII).</text>
</comment>
<comment type="subcellular location">
    <subcellularLocation>
        <location evidence="1">Mitochondrion inner membrane</location>
        <topology evidence="1">Multi-pass membrane protein</topology>
    </subcellularLocation>
</comment>
<comment type="similarity">
    <text evidence="3">Belongs to the cytochrome c oxidase subunit 2 family.</text>
</comment>
<protein>
    <recommendedName>
        <fullName>Cytochrome c oxidase subunit 2</fullName>
        <ecNumber>7.1.1.9</ecNumber>
    </recommendedName>
    <alternativeName>
        <fullName>Cytochrome c oxidase polypeptide II</fullName>
    </alternativeName>
</protein>
<reference key="1">
    <citation type="journal article" date="1995" name="Genetics">
        <title>Nucleotide sequence and gene organization of the starfish Asterina pectinifera mitochondrial genome.</title>
        <authorList>
            <person name="Asakawa S."/>
            <person name="Himeno H."/>
            <person name="Miura K."/>
            <person name="Watanabe K."/>
        </authorList>
    </citation>
    <scope>NUCLEOTIDE SEQUENCE [GENOMIC DNA]</scope>
    <source>
        <tissue>Ovary</tissue>
    </source>
</reference>
<organism>
    <name type="scientific">Patiria pectinifera</name>
    <name type="common">Starfish</name>
    <name type="synonym">Asterina pectinifera</name>
    <dbReference type="NCBI Taxonomy" id="7594"/>
    <lineage>
        <taxon>Eukaryota</taxon>
        <taxon>Metazoa</taxon>
        <taxon>Echinodermata</taxon>
        <taxon>Eleutherozoa</taxon>
        <taxon>Asterozoa</taxon>
        <taxon>Asteroidea</taxon>
        <taxon>Valvatacea</taxon>
        <taxon>Valvatida</taxon>
        <taxon>Asterinidae</taxon>
        <taxon>Patiria</taxon>
    </lineage>
</organism>
<accession>Q37411</accession>
<gene>
    <name type="primary">COII</name>
</gene>
<proteinExistence type="inferred from homology"/>
<geneLocation type="mitochondrion"/>